<comment type="miscellaneous">
    <text evidence="4">There are two types of hair/microfibrillar keratin, I (acidic) and II (neutral to basic).</text>
</comment>
<comment type="similarity">
    <text evidence="3">Belongs to the intermediate filament family.</text>
</comment>
<comment type="sequence caution" evidence="4">
    <conflict type="frameshift">
        <sequence resource="EMBL-CDS" id="AAI19952"/>
    </conflict>
</comment>
<dbReference type="EMBL" id="AAFC03004241">
    <property type="status" value="NOT_ANNOTATED_CDS"/>
    <property type="molecule type" value="Genomic_DNA"/>
</dbReference>
<dbReference type="EMBL" id="AAFC03085602">
    <property type="status" value="NOT_ANNOTATED_CDS"/>
    <property type="molecule type" value="Genomic_DNA"/>
</dbReference>
<dbReference type="EMBL" id="BC119951">
    <property type="protein sequence ID" value="AAI19952.1"/>
    <property type="status" value="ALT_FRAME"/>
    <property type="molecule type" value="mRNA"/>
</dbReference>
<dbReference type="RefSeq" id="NP_001069541.1">
    <property type="nucleotide sequence ID" value="NM_001076073.1"/>
</dbReference>
<dbReference type="SMR" id="Q0P5J7"/>
<dbReference type="FunCoup" id="Q0P5J7">
    <property type="interactions" value="122"/>
</dbReference>
<dbReference type="STRING" id="9913.ENSBTAP00000040659"/>
<dbReference type="PaxDb" id="9913-ENSBTAP00000040659"/>
<dbReference type="GeneID" id="536311"/>
<dbReference type="KEGG" id="bta:536311"/>
<dbReference type="CTD" id="3886"/>
<dbReference type="eggNOG" id="ENOG502QQY9">
    <property type="taxonomic scope" value="Eukaryota"/>
</dbReference>
<dbReference type="HOGENOM" id="CLU_012560_8_0_1"/>
<dbReference type="InParanoid" id="Q0P5J7"/>
<dbReference type="OrthoDB" id="2441647at2759"/>
<dbReference type="TreeFam" id="TF332742"/>
<dbReference type="Proteomes" id="UP000009136">
    <property type="component" value="Unplaced"/>
</dbReference>
<dbReference type="GO" id="GO:0005856">
    <property type="term" value="C:cytoskeleton"/>
    <property type="evidence" value="ECO:0000318"/>
    <property type="project" value="GO_Central"/>
</dbReference>
<dbReference type="GO" id="GO:0005882">
    <property type="term" value="C:intermediate filament"/>
    <property type="evidence" value="ECO:0007669"/>
    <property type="project" value="UniProtKB-KW"/>
</dbReference>
<dbReference type="GO" id="GO:0005198">
    <property type="term" value="F:structural molecule activity"/>
    <property type="evidence" value="ECO:0007669"/>
    <property type="project" value="InterPro"/>
</dbReference>
<dbReference type="GO" id="GO:0030855">
    <property type="term" value="P:epithelial cell differentiation"/>
    <property type="evidence" value="ECO:0000318"/>
    <property type="project" value="GO_Central"/>
</dbReference>
<dbReference type="GO" id="GO:0045109">
    <property type="term" value="P:intermediate filament organization"/>
    <property type="evidence" value="ECO:0000318"/>
    <property type="project" value="GO_Central"/>
</dbReference>
<dbReference type="FunFam" id="1.20.5.1160:FF:000002">
    <property type="entry name" value="Type I keratin 10"/>
    <property type="match status" value="1"/>
</dbReference>
<dbReference type="FunFam" id="1.20.5.170:FF:000002">
    <property type="entry name" value="Type I keratin KA11"/>
    <property type="match status" value="1"/>
</dbReference>
<dbReference type="FunFam" id="1.20.5.500:FF:000001">
    <property type="entry name" value="Type II keratin 23"/>
    <property type="match status" value="1"/>
</dbReference>
<dbReference type="Gene3D" id="1.20.5.170">
    <property type="match status" value="1"/>
</dbReference>
<dbReference type="Gene3D" id="1.20.5.500">
    <property type="entry name" value="Single helix bin"/>
    <property type="match status" value="1"/>
</dbReference>
<dbReference type="Gene3D" id="1.20.5.1160">
    <property type="entry name" value="Vasodilator-stimulated phosphoprotein"/>
    <property type="match status" value="1"/>
</dbReference>
<dbReference type="InterPro" id="IPR018039">
    <property type="entry name" value="IF_conserved"/>
</dbReference>
<dbReference type="InterPro" id="IPR039008">
    <property type="entry name" value="IF_rod_dom"/>
</dbReference>
<dbReference type="InterPro" id="IPR002957">
    <property type="entry name" value="Keratin_I"/>
</dbReference>
<dbReference type="PANTHER" id="PTHR23239">
    <property type="entry name" value="INTERMEDIATE FILAMENT"/>
    <property type="match status" value="1"/>
</dbReference>
<dbReference type="PANTHER" id="PTHR23239:SF193">
    <property type="entry name" value="KERATIN, TYPE I CUTICULAR HA5"/>
    <property type="match status" value="1"/>
</dbReference>
<dbReference type="Pfam" id="PF00038">
    <property type="entry name" value="Filament"/>
    <property type="match status" value="1"/>
</dbReference>
<dbReference type="PRINTS" id="PR01248">
    <property type="entry name" value="TYPE1KERATIN"/>
</dbReference>
<dbReference type="SMART" id="SM01391">
    <property type="entry name" value="Filament"/>
    <property type="match status" value="1"/>
</dbReference>
<dbReference type="SUPFAM" id="SSF64593">
    <property type="entry name" value="Intermediate filament protein, coiled coil region"/>
    <property type="match status" value="1"/>
</dbReference>
<dbReference type="SUPFAM" id="SSF46579">
    <property type="entry name" value="Prefoldin"/>
    <property type="match status" value="1"/>
</dbReference>
<dbReference type="PROSITE" id="PS00226">
    <property type="entry name" value="IF_ROD_1"/>
    <property type="match status" value="1"/>
</dbReference>
<dbReference type="PROSITE" id="PS51842">
    <property type="entry name" value="IF_ROD_2"/>
    <property type="match status" value="1"/>
</dbReference>
<sequence>MASKCLKASFSSGSLKVPGGAGGGSARVSTIFSSSSCKLPSFSRGPRSFSACSVGLGKSSCRAASCLPALCLPSGGFATSYSMAGGWFGEGILTGNEKETMQFLNDRLASYLEKCGSWSGRTRSWRAASTSGVSNSALPVPDYQSYFQTIEELQKKTLCTKSENARLVVQIDNAKLAADDFRTKYETEVSMRQLVESDMNGLRRILDDLTLCKADLEAQVESLKEELLCLKKNHEEEVNSLRCQLGDRLNVEVDAAPPVDLNRVLNEMRCQYETLVENNRREAEDWFNTQTEELNQQVVSSSEQLQSYQAEIIELRRTVNALEIELQAQHSMRDALESTLAETEARYSSQLAQMQGLIGNVESQLAEIRCDLERQNQEYQVLLDVRARLECEINTYRGLLDSEDCKLPCNPCAPDHSPSKSCLPCLPAASCGPGMARTTCSPRPICVPCPGSRF</sequence>
<evidence type="ECO:0000250" key="1">
    <source>
        <dbReference type="UniProtKB" id="Q92764"/>
    </source>
</evidence>
<evidence type="ECO:0000255" key="2"/>
<evidence type="ECO:0000255" key="3">
    <source>
        <dbReference type="PROSITE-ProRule" id="PRU01188"/>
    </source>
</evidence>
<evidence type="ECO:0000305" key="4"/>
<evidence type="ECO:0000312" key="5">
    <source>
        <dbReference type="EMBL" id="AAI19952.1"/>
    </source>
</evidence>
<reference key="1">
    <citation type="journal article" date="2009" name="Science">
        <title>The genome sequence of taurine cattle: a window to ruminant biology and evolution.</title>
        <authorList>
            <consortium name="The bovine genome sequencing and analysis consortium"/>
        </authorList>
    </citation>
    <scope>NUCLEOTIDE SEQUENCE [LARGE SCALE GENOMIC DNA]</scope>
    <source>
        <strain>Hereford</strain>
    </source>
</reference>
<reference evidence="5" key="2">
    <citation type="submission" date="2006-08" db="EMBL/GenBank/DDBJ databases">
        <authorList>
            <consortium name="NIH - Mammalian Gene Collection (MGC) project"/>
        </authorList>
    </citation>
    <scope>NUCLEOTIDE SEQUENCE [LARGE SCALE MRNA]</scope>
    <source>
        <strain evidence="5">Hereford</strain>
        <tissue evidence="5">Fetal skin</tissue>
    </source>
</reference>
<keyword id="KW-0175">Coiled coil</keyword>
<keyword id="KW-0403">Intermediate filament</keyword>
<keyword id="KW-0416">Keratin</keyword>
<keyword id="KW-1185">Reference proteome</keyword>
<name>KRT35_BOVIN</name>
<gene>
    <name evidence="5" type="primary">KRT35</name>
</gene>
<accession>Q0P5J7</accession>
<proteinExistence type="evidence at transcript level"/>
<protein>
    <recommendedName>
        <fullName evidence="1">Keratin, type I cuticular Ha5</fullName>
    </recommendedName>
    <alternativeName>
        <fullName evidence="5">Keratin-35</fullName>
        <shortName>K35</shortName>
    </alternativeName>
</protein>
<feature type="chain" id="PRO_0000361024" description="Keratin, type I cuticular Ha5">
    <location>
        <begin position="1"/>
        <end position="454"/>
    </location>
</feature>
<feature type="domain" description="IF rod" evidence="3">
    <location>
        <begin position="97"/>
        <end position="407"/>
    </location>
</feature>
<feature type="region of interest" description="Head" evidence="2">
    <location>
        <begin position="1"/>
        <end position="97"/>
    </location>
</feature>
<feature type="region of interest" description="Coil 1A">
    <location>
        <begin position="98"/>
        <end position="125"/>
    </location>
</feature>
<feature type="region of interest" description="Linker 1">
    <location>
        <begin position="134"/>
        <end position="142"/>
    </location>
</feature>
<feature type="region of interest" description="Coil 1B">
    <location>
        <begin position="143"/>
        <end position="243"/>
    </location>
</feature>
<feature type="region of interest" description="Linker 12">
    <location>
        <begin position="244"/>
        <end position="259"/>
    </location>
</feature>
<feature type="region of interest" description="Coil 2">
    <location>
        <begin position="260"/>
        <end position="403"/>
    </location>
</feature>
<feature type="region of interest" description="Tail">
    <location>
        <begin position="404"/>
        <end position="454"/>
    </location>
</feature>
<feature type="site" description="Stutter">
    <location>
        <position position="345"/>
    </location>
</feature>
<feature type="sequence conflict" description="In Ref. 2; AAI19952." evidence="4" ref="2">
    <original>S</original>
    <variation>G</variation>
    <location>
        <position position="82"/>
    </location>
</feature>
<organism>
    <name type="scientific">Bos taurus</name>
    <name type="common">Bovine</name>
    <dbReference type="NCBI Taxonomy" id="9913"/>
    <lineage>
        <taxon>Eukaryota</taxon>
        <taxon>Metazoa</taxon>
        <taxon>Chordata</taxon>
        <taxon>Craniata</taxon>
        <taxon>Vertebrata</taxon>
        <taxon>Euteleostomi</taxon>
        <taxon>Mammalia</taxon>
        <taxon>Eutheria</taxon>
        <taxon>Laurasiatheria</taxon>
        <taxon>Artiodactyla</taxon>
        <taxon>Ruminantia</taxon>
        <taxon>Pecora</taxon>
        <taxon>Bovidae</taxon>
        <taxon>Bovinae</taxon>
        <taxon>Bos</taxon>
    </lineage>
</organism>